<dbReference type="EMBL" id="M35027">
    <property type="protein sequence ID" value="AAA48223.1"/>
    <property type="molecule type" value="Genomic_DNA"/>
</dbReference>
<dbReference type="EMBL" id="M35027">
    <property type="protein sequence ID" value="AAA47978.1"/>
    <property type="molecule type" value="Genomic_DNA"/>
</dbReference>
<dbReference type="PIR" id="E42528">
    <property type="entry name" value="E42528"/>
</dbReference>
<dbReference type="SMR" id="P21102"/>
<dbReference type="Proteomes" id="UP000008269">
    <property type="component" value="Segment"/>
</dbReference>
<dbReference type="Gene3D" id="1.25.40.20">
    <property type="entry name" value="Ankyrin repeat-containing domain"/>
    <property type="match status" value="1"/>
</dbReference>
<dbReference type="InterPro" id="IPR002110">
    <property type="entry name" value="Ankyrin_rpt"/>
</dbReference>
<dbReference type="InterPro" id="IPR036770">
    <property type="entry name" value="Ankyrin_rpt-contain_sf"/>
</dbReference>
<dbReference type="SUPFAM" id="SSF48403">
    <property type="entry name" value="Ankyrin repeat"/>
    <property type="match status" value="1"/>
</dbReference>
<dbReference type="PROSITE" id="PS50297">
    <property type="entry name" value="ANK_REP_REGION"/>
    <property type="match status" value="1"/>
</dbReference>
<dbReference type="PROSITE" id="PS50088">
    <property type="entry name" value="ANK_REPEAT"/>
    <property type="match status" value="1"/>
</dbReference>
<protein>
    <recommendedName>
        <fullName>Ankyrin repeat protein C18/B24</fullName>
    </recommendedName>
</protein>
<accession>P21102</accession>
<organism>
    <name type="scientific">Vaccinia virus (strain Copenhagen)</name>
    <name type="common">VACV</name>
    <dbReference type="NCBI Taxonomy" id="10249"/>
    <lineage>
        <taxon>Viruses</taxon>
        <taxon>Varidnaviria</taxon>
        <taxon>Bamfordvirae</taxon>
        <taxon>Nucleocytoviricota</taxon>
        <taxon>Pokkesviricetes</taxon>
        <taxon>Chitovirales</taxon>
        <taxon>Poxviridae</taxon>
        <taxon>Chordopoxvirinae</taxon>
        <taxon>Orthopoxvirus</taxon>
        <taxon>Vaccinia virus</taxon>
    </lineage>
</organism>
<organismHost>
    <name type="scientific">Homo sapiens</name>
    <name type="common">Human</name>
    <dbReference type="NCBI Taxonomy" id="9606"/>
</organismHost>
<proteinExistence type="predicted"/>
<name>VC18_VACCC</name>
<gene>
    <name type="ORF">B24R</name>
</gene>
<gene>
    <name type="ORF">C18L</name>
</gene>
<sequence>MYGLILSRFNNCGYHCYETILIDVFDILSKYMDDIDMIDNENKTLLYYAVDVNNIQFAKRLLEYGASVTTSRSIINTAIQKSSYQRENKTRIVDLLLSYHPTLETMIDAFNRDIRYLYPEPLFACIRYALILDDDFPSKVSMISPVIIRN</sequence>
<feature type="chain" id="PRO_0000067096" description="Ankyrin repeat protein C18/B24">
    <location>
        <begin position="1"/>
        <end position="150"/>
    </location>
</feature>
<feature type="repeat" description="ANK">
    <location>
        <begin position="41"/>
        <end position="73"/>
    </location>
</feature>
<reference key="1">
    <citation type="journal article" date="1990" name="Virology">
        <title>The complete DNA sequence of vaccinia virus.</title>
        <authorList>
            <person name="Goebel S.J."/>
            <person name="Johnson G.P."/>
            <person name="Perkus M.E."/>
            <person name="Davis S.W."/>
            <person name="Winslow J.P."/>
            <person name="Paoletti E."/>
        </authorList>
    </citation>
    <scope>NUCLEOTIDE SEQUENCE [LARGE SCALE GENOMIC DNA]</scope>
</reference>
<reference key="2">
    <citation type="journal article" date="1990" name="Virology">
        <title>Appendix to 'The complete DNA sequence of vaccinia virus'.</title>
        <authorList>
            <person name="Goebel S.J."/>
            <person name="Johnson G.P."/>
            <person name="Perkus M.E."/>
            <person name="Davis S.W."/>
            <person name="Winslow J.P."/>
            <person name="Paoletti E."/>
        </authorList>
    </citation>
    <scope>COMPLETE GENOME</scope>
</reference>
<keyword id="KW-0040">ANK repeat</keyword>
<keyword id="KW-1185">Reference proteome</keyword>